<proteinExistence type="inferred from homology"/>
<comment type="function">
    <text evidence="1">Activates ribosomal RNA transcription. Plays a direct role in upstream activation of rRNA promoters.</text>
</comment>
<comment type="subunit">
    <text evidence="1">Homodimer.</text>
</comment>
<comment type="similarity">
    <text evidence="1">Belongs to the transcriptional regulatory Fis family.</text>
</comment>
<accession>A7ZSF6</accession>
<protein>
    <recommendedName>
        <fullName evidence="1">DNA-binding protein Fis</fullName>
    </recommendedName>
</protein>
<sequence>MFEQRVNSDVLTVSTVNSQDQVTQKPLRDSVKQALKNYFAQLNGQDVNDLYELVLAEVEQPLLDMVMQYTRGNQTRAALMMGINRGTLRKKLKKYGMN</sequence>
<reference key="1">
    <citation type="journal article" date="2008" name="J. Bacteriol.">
        <title>The pangenome structure of Escherichia coli: comparative genomic analysis of E. coli commensal and pathogenic isolates.</title>
        <authorList>
            <person name="Rasko D.A."/>
            <person name="Rosovitz M.J."/>
            <person name="Myers G.S.A."/>
            <person name="Mongodin E.F."/>
            <person name="Fricke W.F."/>
            <person name="Gajer P."/>
            <person name="Crabtree J."/>
            <person name="Sebaihia M."/>
            <person name="Thomson N.R."/>
            <person name="Chaudhuri R."/>
            <person name="Henderson I.R."/>
            <person name="Sperandio V."/>
            <person name="Ravel J."/>
        </authorList>
    </citation>
    <scope>NUCLEOTIDE SEQUENCE [LARGE SCALE GENOMIC DNA]</scope>
    <source>
        <strain>E24377A / ETEC</strain>
    </source>
</reference>
<name>FIS_ECO24</name>
<evidence type="ECO:0000255" key="1">
    <source>
        <dbReference type="HAMAP-Rule" id="MF_00166"/>
    </source>
</evidence>
<dbReference type="EMBL" id="CP000800">
    <property type="protein sequence ID" value="ABV19820.1"/>
    <property type="molecule type" value="Genomic_DNA"/>
</dbReference>
<dbReference type="RefSeq" id="WP_000462905.1">
    <property type="nucleotide sequence ID" value="NC_009801.1"/>
</dbReference>
<dbReference type="SMR" id="A7ZSF6"/>
<dbReference type="GeneID" id="98390389"/>
<dbReference type="KEGG" id="ecw:EcE24377A_3746"/>
<dbReference type="HOGENOM" id="CLU_158040_3_0_6"/>
<dbReference type="Proteomes" id="UP000001122">
    <property type="component" value="Chromosome"/>
</dbReference>
<dbReference type="GO" id="GO:0003700">
    <property type="term" value="F:DNA-binding transcription factor activity"/>
    <property type="evidence" value="ECO:0007669"/>
    <property type="project" value="UniProtKB-UniRule"/>
</dbReference>
<dbReference type="GO" id="GO:0043565">
    <property type="term" value="F:sequence-specific DNA binding"/>
    <property type="evidence" value="ECO:0007669"/>
    <property type="project" value="InterPro"/>
</dbReference>
<dbReference type="FunFam" id="1.10.10.60:FF:000006">
    <property type="entry name" value="DNA-binding protein Fis"/>
    <property type="match status" value="1"/>
</dbReference>
<dbReference type="Gene3D" id="1.10.10.60">
    <property type="entry name" value="Homeodomain-like"/>
    <property type="match status" value="1"/>
</dbReference>
<dbReference type="HAMAP" id="MF_00166">
    <property type="entry name" value="DNA_binding_Fis"/>
    <property type="match status" value="1"/>
</dbReference>
<dbReference type="InterPro" id="IPR005412">
    <property type="entry name" value="Fis_DNA-bd"/>
</dbReference>
<dbReference type="InterPro" id="IPR009057">
    <property type="entry name" value="Homeodomain-like_sf"/>
</dbReference>
<dbReference type="InterPro" id="IPR002197">
    <property type="entry name" value="HTH_Fis"/>
</dbReference>
<dbReference type="InterPro" id="IPR050207">
    <property type="entry name" value="Trans_regulatory_Fis"/>
</dbReference>
<dbReference type="NCBIfam" id="NF001659">
    <property type="entry name" value="PRK00430.1"/>
    <property type="match status" value="1"/>
</dbReference>
<dbReference type="PANTHER" id="PTHR47918">
    <property type="entry name" value="DNA-BINDING PROTEIN FIS"/>
    <property type="match status" value="1"/>
</dbReference>
<dbReference type="PANTHER" id="PTHR47918:SF1">
    <property type="entry name" value="DNA-BINDING PROTEIN FIS"/>
    <property type="match status" value="1"/>
</dbReference>
<dbReference type="Pfam" id="PF02954">
    <property type="entry name" value="HTH_8"/>
    <property type="match status" value="1"/>
</dbReference>
<dbReference type="PIRSF" id="PIRSF002097">
    <property type="entry name" value="DNA-binding_Fis"/>
    <property type="match status" value="1"/>
</dbReference>
<dbReference type="PRINTS" id="PR01591">
    <property type="entry name" value="DNABINDNGFIS"/>
</dbReference>
<dbReference type="PRINTS" id="PR01590">
    <property type="entry name" value="HTHFIS"/>
</dbReference>
<dbReference type="SUPFAM" id="SSF46689">
    <property type="entry name" value="Homeodomain-like"/>
    <property type="match status" value="1"/>
</dbReference>
<organism>
    <name type="scientific">Escherichia coli O139:H28 (strain E24377A / ETEC)</name>
    <dbReference type="NCBI Taxonomy" id="331111"/>
    <lineage>
        <taxon>Bacteria</taxon>
        <taxon>Pseudomonadati</taxon>
        <taxon>Pseudomonadota</taxon>
        <taxon>Gammaproteobacteria</taxon>
        <taxon>Enterobacterales</taxon>
        <taxon>Enterobacteriaceae</taxon>
        <taxon>Escherichia</taxon>
    </lineage>
</organism>
<keyword id="KW-0010">Activator</keyword>
<keyword id="KW-0238">DNA-binding</keyword>
<keyword id="KW-1185">Reference proteome</keyword>
<keyword id="KW-0804">Transcription</keyword>
<keyword id="KW-0805">Transcription regulation</keyword>
<feature type="chain" id="PRO_1000058260" description="DNA-binding protein Fis">
    <location>
        <begin position="1"/>
        <end position="98"/>
    </location>
</feature>
<feature type="DNA-binding region" description="H-T-H motif" evidence="1">
    <location>
        <begin position="74"/>
        <end position="93"/>
    </location>
</feature>
<gene>
    <name evidence="1" type="primary">fis</name>
    <name type="ordered locus">EcE24377A_3746</name>
</gene>